<keyword id="KW-0131">Cell cycle</keyword>
<keyword id="KW-0132">Cell division</keyword>
<keyword id="KW-0997">Cell inner membrane</keyword>
<keyword id="KW-1003">Cell membrane</keyword>
<keyword id="KW-0133">Cell shape</keyword>
<keyword id="KW-0961">Cell wall biogenesis/degradation</keyword>
<keyword id="KW-0328">Glycosyltransferase</keyword>
<keyword id="KW-0472">Membrane</keyword>
<keyword id="KW-0573">Peptidoglycan synthesis</keyword>
<keyword id="KW-1185">Reference proteome</keyword>
<keyword id="KW-0808">Transferase</keyword>
<dbReference type="EC" id="2.4.1.227" evidence="1"/>
<dbReference type="EMBL" id="BX571657">
    <property type="protein sequence ID" value="CAE09473.1"/>
    <property type="molecule type" value="Genomic_DNA"/>
</dbReference>
<dbReference type="RefSeq" id="WP_011138273.1">
    <property type="nucleotide sequence ID" value="NC_005090.1"/>
</dbReference>
<dbReference type="SMR" id="Q7MAD4"/>
<dbReference type="STRING" id="273121.WS0323"/>
<dbReference type="CAZy" id="GT28">
    <property type="family name" value="Glycosyltransferase Family 28"/>
</dbReference>
<dbReference type="KEGG" id="wsu:WS0323"/>
<dbReference type="eggNOG" id="COG0707">
    <property type="taxonomic scope" value="Bacteria"/>
</dbReference>
<dbReference type="HOGENOM" id="CLU_037404_2_1_7"/>
<dbReference type="UniPathway" id="UPA00219"/>
<dbReference type="Proteomes" id="UP000000422">
    <property type="component" value="Chromosome"/>
</dbReference>
<dbReference type="GO" id="GO:0005886">
    <property type="term" value="C:plasma membrane"/>
    <property type="evidence" value="ECO:0007669"/>
    <property type="project" value="UniProtKB-SubCell"/>
</dbReference>
<dbReference type="GO" id="GO:0051991">
    <property type="term" value="F:UDP-N-acetyl-D-glucosamine:N-acetylmuramoyl-L-alanyl-D-glutamyl-meso-2,6-diaminopimelyl-D-alanyl-D-alanine-diphosphoundecaprenol 4-beta-N-acetylglucosaminlytransferase activity"/>
    <property type="evidence" value="ECO:0007669"/>
    <property type="project" value="RHEA"/>
</dbReference>
<dbReference type="GO" id="GO:0050511">
    <property type="term" value="F:undecaprenyldiphospho-muramoylpentapeptide beta-N-acetylglucosaminyltransferase activity"/>
    <property type="evidence" value="ECO:0007669"/>
    <property type="project" value="UniProtKB-UniRule"/>
</dbReference>
<dbReference type="GO" id="GO:0005975">
    <property type="term" value="P:carbohydrate metabolic process"/>
    <property type="evidence" value="ECO:0007669"/>
    <property type="project" value="InterPro"/>
</dbReference>
<dbReference type="GO" id="GO:0051301">
    <property type="term" value="P:cell division"/>
    <property type="evidence" value="ECO:0007669"/>
    <property type="project" value="UniProtKB-KW"/>
</dbReference>
<dbReference type="GO" id="GO:0071555">
    <property type="term" value="P:cell wall organization"/>
    <property type="evidence" value="ECO:0007669"/>
    <property type="project" value="UniProtKB-KW"/>
</dbReference>
<dbReference type="GO" id="GO:0030259">
    <property type="term" value="P:lipid glycosylation"/>
    <property type="evidence" value="ECO:0007669"/>
    <property type="project" value="UniProtKB-UniRule"/>
</dbReference>
<dbReference type="GO" id="GO:0009252">
    <property type="term" value="P:peptidoglycan biosynthetic process"/>
    <property type="evidence" value="ECO:0007669"/>
    <property type="project" value="UniProtKB-UniRule"/>
</dbReference>
<dbReference type="GO" id="GO:0008360">
    <property type="term" value="P:regulation of cell shape"/>
    <property type="evidence" value="ECO:0007669"/>
    <property type="project" value="UniProtKB-KW"/>
</dbReference>
<dbReference type="CDD" id="cd03785">
    <property type="entry name" value="GT28_MurG"/>
    <property type="match status" value="1"/>
</dbReference>
<dbReference type="Gene3D" id="3.40.50.2000">
    <property type="entry name" value="Glycogen Phosphorylase B"/>
    <property type="match status" value="2"/>
</dbReference>
<dbReference type="HAMAP" id="MF_00033">
    <property type="entry name" value="MurG"/>
    <property type="match status" value="1"/>
</dbReference>
<dbReference type="InterPro" id="IPR006009">
    <property type="entry name" value="GlcNAc_MurG"/>
</dbReference>
<dbReference type="InterPro" id="IPR007235">
    <property type="entry name" value="Glyco_trans_28_C"/>
</dbReference>
<dbReference type="InterPro" id="IPR004276">
    <property type="entry name" value="GlycoTrans_28_N"/>
</dbReference>
<dbReference type="NCBIfam" id="TIGR01133">
    <property type="entry name" value="murG"/>
    <property type="match status" value="1"/>
</dbReference>
<dbReference type="PANTHER" id="PTHR21015:SF22">
    <property type="entry name" value="GLYCOSYLTRANSFERASE"/>
    <property type="match status" value="1"/>
</dbReference>
<dbReference type="PANTHER" id="PTHR21015">
    <property type="entry name" value="UDP-N-ACETYLGLUCOSAMINE--N-ACETYLMURAMYL-(PENTAPEPTIDE) PYROPHOSPHORYL-UNDECAPRENOL N-ACETYLGLUCOSAMINE TRANSFERASE 1"/>
    <property type="match status" value="1"/>
</dbReference>
<dbReference type="Pfam" id="PF04101">
    <property type="entry name" value="Glyco_tran_28_C"/>
    <property type="match status" value="1"/>
</dbReference>
<dbReference type="Pfam" id="PF03033">
    <property type="entry name" value="Glyco_transf_28"/>
    <property type="match status" value="1"/>
</dbReference>
<dbReference type="SUPFAM" id="SSF53756">
    <property type="entry name" value="UDP-Glycosyltransferase/glycogen phosphorylase"/>
    <property type="match status" value="1"/>
</dbReference>
<accession>Q7MAD4</accession>
<sequence>MNILLTGGGTGGHLAIAKALMESLASKNQSLFFIGSQRGQDRSWFEHEEGFKRRFFLETQGVVNQRGIAKIRSLSSQFQAMLEARKILKNHQIKRVVSVGGYSAAPASLAALSLGIPLYIHEQNAKVGLLNRLLKPFSRAFLSSYDSNSLIRDYPVRDAFFEVARVRSRVKKILFLGGSQGAKAINDWALELAPLIHQRGIAIMHQCGEVDYERMKRGYEERSIPVELFAFDRAIHQKMQQADLAISRAGASSLWELGANGLPALFIPYPFAAGDHQYYNAKFILDQGLGWMVRQENLSTEVLLEILEEDLSQKSECLMAYVKRGAADRMADFILS</sequence>
<reference key="1">
    <citation type="journal article" date="2003" name="Proc. Natl. Acad. Sci. U.S.A.">
        <title>Complete genome sequence and analysis of Wolinella succinogenes.</title>
        <authorList>
            <person name="Baar C."/>
            <person name="Eppinger M."/>
            <person name="Raddatz G."/>
            <person name="Simon J."/>
            <person name="Lanz C."/>
            <person name="Klimmek O."/>
            <person name="Nandakumar R."/>
            <person name="Gross R."/>
            <person name="Rosinus A."/>
            <person name="Keller H."/>
            <person name="Jagtap P."/>
            <person name="Linke B."/>
            <person name="Meyer F."/>
            <person name="Lederer H."/>
            <person name="Schuster S.C."/>
        </authorList>
    </citation>
    <scope>NUCLEOTIDE SEQUENCE [LARGE SCALE GENOMIC DNA]</scope>
    <source>
        <strain>ATCC 29543 / DSM 1740 / CCUG 13145 / JCM 31913 / LMG 7466 / NCTC 11488 / FDC 602W</strain>
    </source>
</reference>
<name>MURG_WOLSU</name>
<feature type="chain" id="PRO_0000225112" description="UDP-N-acetylglucosamine--N-acetylmuramyl-(pentapeptide) pyrophosphoryl-undecaprenol N-acetylglucosamine transferase">
    <location>
        <begin position="1"/>
        <end position="336"/>
    </location>
</feature>
<feature type="binding site" evidence="1">
    <location>
        <begin position="10"/>
        <end position="12"/>
    </location>
    <ligand>
        <name>UDP-N-acetyl-alpha-D-glucosamine</name>
        <dbReference type="ChEBI" id="CHEBI:57705"/>
    </ligand>
</feature>
<feature type="binding site" evidence="1">
    <location>
        <position position="124"/>
    </location>
    <ligand>
        <name>UDP-N-acetyl-alpha-D-glucosamine</name>
        <dbReference type="ChEBI" id="CHEBI:57705"/>
    </ligand>
</feature>
<feature type="binding site" evidence="1">
    <location>
        <position position="157"/>
    </location>
    <ligand>
        <name>UDP-N-acetyl-alpha-D-glucosamine</name>
        <dbReference type="ChEBI" id="CHEBI:57705"/>
    </ligand>
</feature>
<feature type="binding site" evidence="1">
    <location>
        <position position="179"/>
    </location>
    <ligand>
        <name>UDP-N-acetyl-alpha-D-glucosamine</name>
        <dbReference type="ChEBI" id="CHEBI:57705"/>
    </ligand>
</feature>
<feature type="binding site" evidence="1">
    <location>
        <position position="277"/>
    </location>
    <ligand>
        <name>UDP-N-acetyl-alpha-D-glucosamine</name>
        <dbReference type="ChEBI" id="CHEBI:57705"/>
    </ligand>
</feature>
<protein>
    <recommendedName>
        <fullName evidence="1">UDP-N-acetylglucosamine--N-acetylmuramyl-(pentapeptide) pyrophosphoryl-undecaprenol N-acetylglucosamine transferase</fullName>
        <ecNumber evidence="1">2.4.1.227</ecNumber>
    </recommendedName>
    <alternativeName>
        <fullName evidence="1">Undecaprenyl-PP-MurNAc-pentapeptide-UDPGlcNAc GlcNAc transferase</fullName>
    </alternativeName>
</protein>
<comment type="function">
    <text evidence="1">Cell wall formation. Catalyzes the transfer of a GlcNAc subunit on undecaprenyl-pyrophosphoryl-MurNAc-pentapeptide (lipid intermediate I) to form undecaprenyl-pyrophosphoryl-MurNAc-(pentapeptide)GlcNAc (lipid intermediate II).</text>
</comment>
<comment type="catalytic activity">
    <reaction evidence="1">
        <text>di-trans,octa-cis-undecaprenyl diphospho-N-acetyl-alpha-D-muramoyl-L-alanyl-D-glutamyl-meso-2,6-diaminopimeloyl-D-alanyl-D-alanine + UDP-N-acetyl-alpha-D-glucosamine = di-trans,octa-cis-undecaprenyl diphospho-[N-acetyl-alpha-D-glucosaminyl-(1-&gt;4)]-N-acetyl-alpha-D-muramoyl-L-alanyl-D-glutamyl-meso-2,6-diaminopimeloyl-D-alanyl-D-alanine + UDP + H(+)</text>
        <dbReference type="Rhea" id="RHEA:31227"/>
        <dbReference type="ChEBI" id="CHEBI:15378"/>
        <dbReference type="ChEBI" id="CHEBI:57705"/>
        <dbReference type="ChEBI" id="CHEBI:58223"/>
        <dbReference type="ChEBI" id="CHEBI:61387"/>
        <dbReference type="ChEBI" id="CHEBI:61388"/>
        <dbReference type="EC" id="2.4.1.227"/>
    </reaction>
</comment>
<comment type="pathway">
    <text evidence="1">Cell wall biogenesis; peptidoglycan biosynthesis.</text>
</comment>
<comment type="subcellular location">
    <subcellularLocation>
        <location evidence="1">Cell inner membrane</location>
        <topology evidence="1">Peripheral membrane protein</topology>
        <orientation evidence="1">Cytoplasmic side</orientation>
    </subcellularLocation>
</comment>
<comment type="similarity">
    <text evidence="1">Belongs to the glycosyltransferase 28 family. MurG subfamily.</text>
</comment>
<proteinExistence type="inferred from homology"/>
<gene>
    <name evidence="1" type="primary">murG</name>
    <name type="ordered locus">WS0323</name>
</gene>
<organism>
    <name type="scientific">Wolinella succinogenes (strain ATCC 29543 / DSM 1740 / CCUG 13145 / JCM 31913 / LMG 7466 / NCTC 11488 / FDC 602W)</name>
    <name type="common">Vibrio succinogenes</name>
    <dbReference type="NCBI Taxonomy" id="273121"/>
    <lineage>
        <taxon>Bacteria</taxon>
        <taxon>Pseudomonadati</taxon>
        <taxon>Campylobacterota</taxon>
        <taxon>Epsilonproteobacteria</taxon>
        <taxon>Campylobacterales</taxon>
        <taxon>Helicobacteraceae</taxon>
        <taxon>Wolinella</taxon>
    </lineage>
</organism>
<evidence type="ECO:0000255" key="1">
    <source>
        <dbReference type="HAMAP-Rule" id="MF_00033"/>
    </source>
</evidence>